<evidence type="ECO:0000255" key="1">
    <source>
        <dbReference type="HAMAP-Rule" id="MF_00283"/>
    </source>
</evidence>
<feature type="chain" id="PRO_0000126928" description="Phenylalanine--tRNA ligase beta subunit">
    <location>
        <begin position="1"/>
        <end position="839"/>
    </location>
</feature>
<feature type="domain" description="tRNA-binding" evidence="1">
    <location>
        <begin position="42"/>
        <end position="166"/>
    </location>
</feature>
<feature type="domain" description="B5" evidence="1">
    <location>
        <begin position="421"/>
        <end position="496"/>
    </location>
</feature>
<feature type="domain" description="FDX-ACB" evidence="1">
    <location>
        <begin position="745"/>
        <end position="838"/>
    </location>
</feature>
<feature type="binding site" evidence="1">
    <location>
        <position position="474"/>
    </location>
    <ligand>
        <name>Mg(2+)</name>
        <dbReference type="ChEBI" id="CHEBI:18420"/>
        <note>shared with alpha subunit</note>
    </ligand>
</feature>
<feature type="binding site" evidence="1">
    <location>
        <position position="480"/>
    </location>
    <ligand>
        <name>Mg(2+)</name>
        <dbReference type="ChEBI" id="CHEBI:18420"/>
        <note>shared with alpha subunit</note>
    </ligand>
</feature>
<feature type="binding site" evidence="1">
    <location>
        <position position="483"/>
    </location>
    <ligand>
        <name>Mg(2+)</name>
        <dbReference type="ChEBI" id="CHEBI:18420"/>
        <note>shared with alpha subunit</note>
    </ligand>
</feature>
<feature type="binding site" evidence="1">
    <location>
        <position position="484"/>
    </location>
    <ligand>
        <name>Mg(2+)</name>
        <dbReference type="ChEBI" id="CHEBI:18420"/>
        <note>shared with alpha subunit</note>
    </ligand>
</feature>
<name>SYFB_CUTAK</name>
<reference key="1">
    <citation type="journal article" date="2004" name="Science">
        <title>The complete genome sequence of Propionibacterium acnes, a commensal of human skin.</title>
        <authorList>
            <person name="Brueggemann H."/>
            <person name="Henne A."/>
            <person name="Hoster F."/>
            <person name="Liesegang H."/>
            <person name="Wiezer A."/>
            <person name="Strittmatter A."/>
            <person name="Hujer S."/>
            <person name="Duerre P."/>
            <person name="Gottschalk G."/>
        </authorList>
    </citation>
    <scope>NUCLEOTIDE SEQUENCE [LARGE SCALE GENOMIC DNA]</scope>
    <source>
        <strain>DSM 16379 / KPA171202</strain>
    </source>
</reference>
<organism>
    <name type="scientific">Cutibacterium acnes (strain DSM 16379 / KPA171202)</name>
    <name type="common">Propionibacterium acnes</name>
    <dbReference type="NCBI Taxonomy" id="267747"/>
    <lineage>
        <taxon>Bacteria</taxon>
        <taxon>Bacillati</taxon>
        <taxon>Actinomycetota</taxon>
        <taxon>Actinomycetes</taxon>
        <taxon>Propionibacteriales</taxon>
        <taxon>Propionibacteriaceae</taxon>
        <taxon>Cutibacterium</taxon>
    </lineage>
</organism>
<sequence>MKVPMSWLQAMVNLPDGTTTDKVAKALTNHTATVEKVEVVGGELTGPIVIGHILSSVPEPQKNGKVINWCRVDVGPRYNAEGHPKNIEEGVEGRGIICGAPNAVEGAWVVVSLPGAVLPGGFAISARKTYGHMSDGMLCASDELGIGVDDAGIITLPPSVEGHQLVPGEDALPILGVPEEVLDVDVTPDIGYCMSMRGIAREVAHAMSVHFRDPYDEEPIGPVLGPVAVDVQSDACSQFIALPVSGMNLGAPTPRFITDRITRAGMRPINLVVDVTNYVMLESGQPLHAYDADNVSGTIVVRKAHEGEHLLTLDDTDRTLDPDDLVIADDSGAIGLAGVMGGAATEVTAETTSIILEGAHFDPMTVARAYRRHKLGSEASRRFERGVDPICAHTAAVRAAELLAQYGGATVGEPTVVGEVPEMPRQTINADLPNRILGTKVPTEEVIEILTRSGVKVTALGDSLHLVAPTWRPDLVDAYDYVEEIGRKIGFDRIKAVLPPSLGASGLTKAQRGRRRVLRSVVEAGFVELITLPFIGDKDLDVLGISGDDTRHATVKLANPLDDTRPYLRTTLLPGLFHAVTTNMSRSQDDLAVFESGTVFRAVTPAAAPRPGVDERPSDEVLAEIDAALPAQPRMLAAVICGSWLPDRWDGESVKADWRHAVLVAQKAADALGVRLVRKADRQAPWHPGRCAALIVDGKVIGHAGELHPTVVSKAGLPQRTCAVEFNLDALVAAAPRGGEVMAISSFPVAKEDVALVVDKSVAAEDVRQALIEGAGPLLESIELFDVYEGEQVGDNRKSLAFNLRLRGADRTLTDSEALETRDAAVARAEETCGAQLRS</sequence>
<dbReference type="EC" id="6.1.1.20" evidence="1"/>
<dbReference type="EMBL" id="AE017283">
    <property type="protein sequence ID" value="AAT83159.1"/>
    <property type="molecule type" value="Genomic_DNA"/>
</dbReference>
<dbReference type="RefSeq" id="WP_011183858.1">
    <property type="nucleotide sequence ID" value="NC_006085.1"/>
</dbReference>
<dbReference type="SMR" id="Q6A7V6"/>
<dbReference type="EnsemblBacteria" id="AAT83159">
    <property type="protein sequence ID" value="AAT83159"/>
    <property type="gene ID" value="PPA1408"/>
</dbReference>
<dbReference type="KEGG" id="pac:PPA1408"/>
<dbReference type="PATRIC" id="fig|267747.3.peg.1453"/>
<dbReference type="eggNOG" id="COG0072">
    <property type="taxonomic scope" value="Bacteria"/>
</dbReference>
<dbReference type="eggNOG" id="COG0073">
    <property type="taxonomic scope" value="Bacteria"/>
</dbReference>
<dbReference type="HOGENOM" id="CLU_016891_0_0_11"/>
<dbReference type="Proteomes" id="UP000000603">
    <property type="component" value="Chromosome"/>
</dbReference>
<dbReference type="GO" id="GO:0009328">
    <property type="term" value="C:phenylalanine-tRNA ligase complex"/>
    <property type="evidence" value="ECO:0007669"/>
    <property type="project" value="TreeGrafter"/>
</dbReference>
<dbReference type="GO" id="GO:0005524">
    <property type="term" value="F:ATP binding"/>
    <property type="evidence" value="ECO:0007669"/>
    <property type="project" value="UniProtKB-UniRule"/>
</dbReference>
<dbReference type="GO" id="GO:0000287">
    <property type="term" value="F:magnesium ion binding"/>
    <property type="evidence" value="ECO:0007669"/>
    <property type="project" value="UniProtKB-UniRule"/>
</dbReference>
<dbReference type="GO" id="GO:0004826">
    <property type="term" value="F:phenylalanine-tRNA ligase activity"/>
    <property type="evidence" value="ECO:0007669"/>
    <property type="project" value="UniProtKB-UniRule"/>
</dbReference>
<dbReference type="GO" id="GO:0000049">
    <property type="term" value="F:tRNA binding"/>
    <property type="evidence" value="ECO:0007669"/>
    <property type="project" value="UniProtKB-KW"/>
</dbReference>
<dbReference type="GO" id="GO:0006432">
    <property type="term" value="P:phenylalanyl-tRNA aminoacylation"/>
    <property type="evidence" value="ECO:0007669"/>
    <property type="project" value="UniProtKB-UniRule"/>
</dbReference>
<dbReference type="CDD" id="cd00769">
    <property type="entry name" value="PheRS_beta_core"/>
    <property type="match status" value="1"/>
</dbReference>
<dbReference type="CDD" id="cd02796">
    <property type="entry name" value="tRNA_bind_bactPheRS"/>
    <property type="match status" value="1"/>
</dbReference>
<dbReference type="FunFam" id="3.30.70.380:FF:000001">
    <property type="entry name" value="Phenylalanine--tRNA ligase beta subunit"/>
    <property type="match status" value="1"/>
</dbReference>
<dbReference type="Gene3D" id="3.30.56.10">
    <property type="match status" value="2"/>
</dbReference>
<dbReference type="Gene3D" id="3.30.930.10">
    <property type="entry name" value="Bira Bifunctional Protein, Domain 2"/>
    <property type="match status" value="1"/>
</dbReference>
<dbReference type="Gene3D" id="3.30.70.380">
    <property type="entry name" value="Ferrodoxin-fold anticodon-binding domain"/>
    <property type="match status" value="1"/>
</dbReference>
<dbReference type="Gene3D" id="2.40.50.140">
    <property type="entry name" value="Nucleic acid-binding proteins"/>
    <property type="match status" value="1"/>
</dbReference>
<dbReference type="Gene3D" id="3.50.40.10">
    <property type="entry name" value="Phenylalanyl-trna Synthetase, Chain B, domain 3"/>
    <property type="match status" value="1"/>
</dbReference>
<dbReference type="HAMAP" id="MF_00283">
    <property type="entry name" value="Phe_tRNA_synth_beta1"/>
    <property type="match status" value="1"/>
</dbReference>
<dbReference type="InterPro" id="IPR045864">
    <property type="entry name" value="aa-tRNA-synth_II/BPL/LPL"/>
</dbReference>
<dbReference type="InterPro" id="IPR005146">
    <property type="entry name" value="B3/B4_tRNA-bd"/>
</dbReference>
<dbReference type="InterPro" id="IPR009061">
    <property type="entry name" value="DNA-bd_dom_put_sf"/>
</dbReference>
<dbReference type="InterPro" id="IPR005121">
    <property type="entry name" value="Fdx_antiC-bd"/>
</dbReference>
<dbReference type="InterPro" id="IPR036690">
    <property type="entry name" value="Fdx_antiC-bd_sf"/>
</dbReference>
<dbReference type="InterPro" id="IPR012340">
    <property type="entry name" value="NA-bd_OB-fold"/>
</dbReference>
<dbReference type="InterPro" id="IPR045060">
    <property type="entry name" value="Phe-tRNA-ligase_IIc_bsu"/>
</dbReference>
<dbReference type="InterPro" id="IPR004532">
    <property type="entry name" value="Phe-tRNA-ligase_IIc_bsu_bact"/>
</dbReference>
<dbReference type="InterPro" id="IPR020825">
    <property type="entry name" value="Phe-tRNA_synthase-like_B3/B4"/>
</dbReference>
<dbReference type="InterPro" id="IPR041616">
    <property type="entry name" value="PheRS_beta_core"/>
</dbReference>
<dbReference type="InterPro" id="IPR002547">
    <property type="entry name" value="tRNA-bd_dom"/>
</dbReference>
<dbReference type="InterPro" id="IPR033714">
    <property type="entry name" value="tRNA_bind_bactPheRS"/>
</dbReference>
<dbReference type="InterPro" id="IPR005147">
    <property type="entry name" value="tRNA_synthase_B5-dom"/>
</dbReference>
<dbReference type="NCBIfam" id="TIGR00472">
    <property type="entry name" value="pheT_bact"/>
    <property type="match status" value="1"/>
</dbReference>
<dbReference type="PANTHER" id="PTHR10947:SF0">
    <property type="entry name" value="PHENYLALANINE--TRNA LIGASE BETA SUBUNIT"/>
    <property type="match status" value="1"/>
</dbReference>
<dbReference type="PANTHER" id="PTHR10947">
    <property type="entry name" value="PHENYLALANYL-TRNA SYNTHETASE BETA CHAIN AND LEUCINE-RICH REPEAT-CONTAINING PROTEIN 47"/>
    <property type="match status" value="1"/>
</dbReference>
<dbReference type="Pfam" id="PF03483">
    <property type="entry name" value="B3_4"/>
    <property type="match status" value="1"/>
</dbReference>
<dbReference type="Pfam" id="PF03484">
    <property type="entry name" value="B5"/>
    <property type="match status" value="1"/>
</dbReference>
<dbReference type="Pfam" id="PF03147">
    <property type="entry name" value="FDX-ACB"/>
    <property type="match status" value="1"/>
</dbReference>
<dbReference type="Pfam" id="PF17759">
    <property type="entry name" value="tRNA_synthFbeta"/>
    <property type="match status" value="1"/>
</dbReference>
<dbReference type="SMART" id="SM00873">
    <property type="entry name" value="B3_4"/>
    <property type="match status" value="1"/>
</dbReference>
<dbReference type="SMART" id="SM00874">
    <property type="entry name" value="B5"/>
    <property type="match status" value="1"/>
</dbReference>
<dbReference type="SMART" id="SM00896">
    <property type="entry name" value="FDX-ACB"/>
    <property type="match status" value="1"/>
</dbReference>
<dbReference type="SUPFAM" id="SSF54991">
    <property type="entry name" value="Anticodon-binding domain of PheRS"/>
    <property type="match status" value="1"/>
</dbReference>
<dbReference type="SUPFAM" id="SSF55681">
    <property type="entry name" value="Class II aaRS and biotin synthetases"/>
    <property type="match status" value="1"/>
</dbReference>
<dbReference type="SUPFAM" id="SSF50249">
    <property type="entry name" value="Nucleic acid-binding proteins"/>
    <property type="match status" value="1"/>
</dbReference>
<dbReference type="SUPFAM" id="SSF56037">
    <property type="entry name" value="PheT/TilS domain"/>
    <property type="match status" value="1"/>
</dbReference>
<dbReference type="SUPFAM" id="SSF46955">
    <property type="entry name" value="Putative DNA-binding domain"/>
    <property type="match status" value="1"/>
</dbReference>
<dbReference type="PROSITE" id="PS51483">
    <property type="entry name" value="B5"/>
    <property type="match status" value="1"/>
</dbReference>
<dbReference type="PROSITE" id="PS51447">
    <property type="entry name" value="FDX_ACB"/>
    <property type="match status" value="1"/>
</dbReference>
<dbReference type="PROSITE" id="PS50886">
    <property type="entry name" value="TRBD"/>
    <property type="match status" value="1"/>
</dbReference>
<gene>
    <name evidence="1" type="primary">pheT</name>
    <name type="ordered locus">PPA1408</name>
</gene>
<protein>
    <recommendedName>
        <fullName evidence="1">Phenylalanine--tRNA ligase beta subunit</fullName>
        <ecNumber evidence="1">6.1.1.20</ecNumber>
    </recommendedName>
    <alternativeName>
        <fullName evidence="1">Phenylalanyl-tRNA synthetase beta subunit</fullName>
        <shortName evidence="1">PheRS</shortName>
    </alternativeName>
</protein>
<accession>Q6A7V6</accession>
<proteinExistence type="inferred from homology"/>
<keyword id="KW-0030">Aminoacyl-tRNA synthetase</keyword>
<keyword id="KW-0067">ATP-binding</keyword>
<keyword id="KW-0963">Cytoplasm</keyword>
<keyword id="KW-0436">Ligase</keyword>
<keyword id="KW-0460">Magnesium</keyword>
<keyword id="KW-0479">Metal-binding</keyword>
<keyword id="KW-0547">Nucleotide-binding</keyword>
<keyword id="KW-0648">Protein biosynthesis</keyword>
<keyword id="KW-0694">RNA-binding</keyword>
<keyword id="KW-0820">tRNA-binding</keyword>
<comment type="catalytic activity">
    <reaction evidence="1">
        <text>tRNA(Phe) + L-phenylalanine + ATP = L-phenylalanyl-tRNA(Phe) + AMP + diphosphate + H(+)</text>
        <dbReference type="Rhea" id="RHEA:19413"/>
        <dbReference type="Rhea" id="RHEA-COMP:9668"/>
        <dbReference type="Rhea" id="RHEA-COMP:9699"/>
        <dbReference type="ChEBI" id="CHEBI:15378"/>
        <dbReference type="ChEBI" id="CHEBI:30616"/>
        <dbReference type="ChEBI" id="CHEBI:33019"/>
        <dbReference type="ChEBI" id="CHEBI:58095"/>
        <dbReference type="ChEBI" id="CHEBI:78442"/>
        <dbReference type="ChEBI" id="CHEBI:78531"/>
        <dbReference type="ChEBI" id="CHEBI:456215"/>
        <dbReference type="EC" id="6.1.1.20"/>
    </reaction>
</comment>
<comment type="cofactor">
    <cofactor evidence="1">
        <name>Mg(2+)</name>
        <dbReference type="ChEBI" id="CHEBI:18420"/>
    </cofactor>
    <text evidence="1">Binds 2 magnesium ions per tetramer.</text>
</comment>
<comment type="subunit">
    <text evidence="1">Tetramer of two alpha and two beta subunits.</text>
</comment>
<comment type="subcellular location">
    <subcellularLocation>
        <location evidence="1">Cytoplasm</location>
    </subcellularLocation>
</comment>
<comment type="similarity">
    <text evidence="1">Belongs to the phenylalanyl-tRNA synthetase beta subunit family. Type 1 subfamily.</text>
</comment>